<gene>
    <name evidence="1" type="primary">aroD</name>
    <name type="ordered locus">SEN1686</name>
</gene>
<accession>B5QVU3</accession>
<proteinExistence type="inferred from homology"/>
<dbReference type="EC" id="4.2.1.10" evidence="1"/>
<dbReference type="EMBL" id="AM933172">
    <property type="protein sequence ID" value="CAR33268.1"/>
    <property type="molecule type" value="Genomic_DNA"/>
</dbReference>
<dbReference type="RefSeq" id="WP_000860224.1">
    <property type="nucleotide sequence ID" value="NC_011294.1"/>
</dbReference>
<dbReference type="SMR" id="B5QVU3"/>
<dbReference type="KEGG" id="set:SEN1686"/>
<dbReference type="HOGENOM" id="CLU_064444_0_0_6"/>
<dbReference type="UniPathway" id="UPA00053">
    <property type="reaction ID" value="UER00086"/>
</dbReference>
<dbReference type="Proteomes" id="UP000000613">
    <property type="component" value="Chromosome"/>
</dbReference>
<dbReference type="GO" id="GO:0003855">
    <property type="term" value="F:3-dehydroquinate dehydratase activity"/>
    <property type="evidence" value="ECO:0007669"/>
    <property type="project" value="UniProtKB-UniRule"/>
</dbReference>
<dbReference type="GO" id="GO:0046279">
    <property type="term" value="P:3,4-dihydroxybenzoate biosynthetic process"/>
    <property type="evidence" value="ECO:0007669"/>
    <property type="project" value="TreeGrafter"/>
</dbReference>
<dbReference type="GO" id="GO:0008652">
    <property type="term" value="P:amino acid biosynthetic process"/>
    <property type="evidence" value="ECO:0007669"/>
    <property type="project" value="UniProtKB-KW"/>
</dbReference>
<dbReference type="GO" id="GO:0009073">
    <property type="term" value="P:aromatic amino acid family biosynthetic process"/>
    <property type="evidence" value="ECO:0007669"/>
    <property type="project" value="UniProtKB-KW"/>
</dbReference>
<dbReference type="GO" id="GO:0009423">
    <property type="term" value="P:chorismate biosynthetic process"/>
    <property type="evidence" value="ECO:0007669"/>
    <property type="project" value="UniProtKB-UniRule"/>
</dbReference>
<dbReference type="CDD" id="cd00502">
    <property type="entry name" value="DHQase_I"/>
    <property type="match status" value="1"/>
</dbReference>
<dbReference type="FunFam" id="3.20.20.70:FF:000047">
    <property type="entry name" value="3-dehydroquinate dehydratase"/>
    <property type="match status" value="1"/>
</dbReference>
<dbReference type="Gene3D" id="3.20.20.70">
    <property type="entry name" value="Aldolase class I"/>
    <property type="match status" value="1"/>
</dbReference>
<dbReference type="HAMAP" id="MF_00214">
    <property type="entry name" value="AroD"/>
    <property type="match status" value="1"/>
</dbReference>
<dbReference type="InterPro" id="IPR018508">
    <property type="entry name" value="3-dehydroquinate_DH_AS"/>
</dbReference>
<dbReference type="InterPro" id="IPR013785">
    <property type="entry name" value="Aldolase_TIM"/>
</dbReference>
<dbReference type="InterPro" id="IPR001381">
    <property type="entry name" value="DHquinase_I"/>
</dbReference>
<dbReference type="InterPro" id="IPR050146">
    <property type="entry name" value="Type-I_3-dehydroquinase"/>
</dbReference>
<dbReference type="NCBIfam" id="TIGR01093">
    <property type="entry name" value="aroD"/>
    <property type="match status" value="1"/>
</dbReference>
<dbReference type="PANTHER" id="PTHR43699">
    <property type="entry name" value="3-DEHYDROQUINATE DEHYDRATASE"/>
    <property type="match status" value="1"/>
</dbReference>
<dbReference type="PANTHER" id="PTHR43699:SF1">
    <property type="entry name" value="3-DEHYDROQUINATE DEHYDRATASE"/>
    <property type="match status" value="1"/>
</dbReference>
<dbReference type="Pfam" id="PF01487">
    <property type="entry name" value="DHquinase_I"/>
    <property type="match status" value="1"/>
</dbReference>
<dbReference type="SUPFAM" id="SSF51569">
    <property type="entry name" value="Aldolase"/>
    <property type="match status" value="1"/>
</dbReference>
<dbReference type="PROSITE" id="PS01028">
    <property type="entry name" value="DEHYDROQUINASE_I"/>
    <property type="match status" value="1"/>
</dbReference>
<sequence>MKTVTVRDLVVGEGAPKIIVSLMGKTITDVKSEALAYREADFDILEWRVDHFANVTTAESVLEAAGAIREIITDKPLLFTFRSAKEGGEQALTTGQYIALNRAAVDSGLVDMIDLELFTGDDEVKATVGYAHQHNVAVIMSNHDFHKTPAAEEIVQRLRKMQELGADIPKIAVMPQTKADVLTLLTATVEMQERYADRPIITMSMSKTGVISRLAGEVFGSAATFGAVKKASAPGQISVADLRTVLTILHQA</sequence>
<evidence type="ECO:0000255" key="1">
    <source>
        <dbReference type="HAMAP-Rule" id="MF_00214"/>
    </source>
</evidence>
<organism>
    <name type="scientific">Salmonella enteritidis PT4 (strain P125109)</name>
    <dbReference type="NCBI Taxonomy" id="550537"/>
    <lineage>
        <taxon>Bacteria</taxon>
        <taxon>Pseudomonadati</taxon>
        <taxon>Pseudomonadota</taxon>
        <taxon>Gammaproteobacteria</taxon>
        <taxon>Enterobacterales</taxon>
        <taxon>Enterobacteriaceae</taxon>
        <taxon>Salmonella</taxon>
    </lineage>
</organism>
<name>AROD_SALEP</name>
<protein>
    <recommendedName>
        <fullName evidence="1">3-dehydroquinate dehydratase</fullName>
        <shortName evidence="1">3-dehydroquinase</shortName>
        <ecNumber evidence="1">4.2.1.10</ecNumber>
    </recommendedName>
    <alternativeName>
        <fullName evidence="1">Type I DHQase</fullName>
    </alternativeName>
    <alternativeName>
        <fullName evidence="1">Type I dehydroquinase</fullName>
        <shortName evidence="1">DHQ1</shortName>
    </alternativeName>
</protein>
<feature type="chain" id="PRO_1000099914" description="3-dehydroquinate dehydratase">
    <location>
        <begin position="1"/>
        <end position="252"/>
    </location>
</feature>
<feature type="active site" description="Proton donor/acceptor" evidence="1">
    <location>
        <position position="143"/>
    </location>
</feature>
<feature type="active site" description="Schiff-base intermediate with substrate" evidence="1">
    <location>
        <position position="170"/>
    </location>
</feature>
<feature type="binding site" evidence="1">
    <location>
        <position position="21"/>
    </location>
    <ligand>
        <name>3-dehydroquinate</name>
        <dbReference type="ChEBI" id="CHEBI:32364"/>
    </ligand>
</feature>
<feature type="binding site" evidence="1">
    <location>
        <begin position="46"/>
        <end position="48"/>
    </location>
    <ligand>
        <name>3-dehydroquinate</name>
        <dbReference type="ChEBI" id="CHEBI:32364"/>
    </ligand>
</feature>
<feature type="binding site" evidence="1">
    <location>
        <position position="82"/>
    </location>
    <ligand>
        <name>3-dehydroquinate</name>
        <dbReference type="ChEBI" id="CHEBI:32364"/>
    </ligand>
</feature>
<feature type="binding site" evidence="1">
    <location>
        <position position="213"/>
    </location>
    <ligand>
        <name>3-dehydroquinate</name>
        <dbReference type="ChEBI" id="CHEBI:32364"/>
    </ligand>
</feature>
<feature type="binding site" evidence="1">
    <location>
        <position position="232"/>
    </location>
    <ligand>
        <name>3-dehydroquinate</name>
        <dbReference type="ChEBI" id="CHEBI:32364"/>
    </ligand>
</feature>
<feature type="binding site" evidence="1">
    <location>
        <position position="236"/>
    </location>
    <ligand>
        <name>3-dehydroquinate</name>
        <dbReference type="ChEBI" id="CHEBI:32364"/>
    </ligand>
</feature>
<keyword id="KW-0028">Amino-acid biosynthesis</keyword>
<keyword id="KW-0057">Aromatic amino acid biosynthesis</keyword>
<keyword id="KW-0456">Lyase</keyword>
<keyword id="KW-0704">Schiff base</keyword>
<reference key="1">
    <citation type="journal article" date="2008" name="Genome Res.">
        <title>Comparative genome analysis of Salmonella enteritidis PT4 and Salmonella gallinarum 287/91 provides insights into evolutionary and host adaptation pathways.</title>
        <authorList>
            <person name="Thomson N.R."/>
            <person name="Clayton D.J."/>
            <person name="Windhorst D."/>
            <person name="Vernikos G."/>
            <person name="Davidson S."/>
            <person name="Churcher C."/>
            <person name="Quail M.A."/>
            <person name="Stevens M."/>
            <person name="Jones M.A."/>
            <person name="Watson M."/>
            <person name="Barron A."/>
            <person name="Layton A."/>
            <person name="Pickard D."/>
            <person name="Kingsley R.A."/>
            <person name="Bignell A."/>
            <person name="Clark L."/>
            <person name="Harris B."/>
            <person name="Ormond D."/>
            <person name="Abdellah Z."/>
            <person name="Brooks K."/>
            <person name="Cherevach I."/>
            <person name="Chillingworth T."/>
            <person name="Woodward J."/>
            <person name="Norberczak H."/>
            <person name="Lord A."/>
            <person name="Arrowsmith C."/>
            <person name="Jagels K."/>
            <person name="Moule S."/>
            <person name="Mungall K."/>
            <person name="Saunders M."/>
            <person name="Whitehead S."/>
            <person name="Chabalgoity J.A."/>
            <person name="Maskell D."/>
            <person name="Humphreys T."/>
            <person name="Roberts M."/>
            <person name="Barrow P.A."/>
            <person name="Dougan G."/>
            <person name="Parkhill J."/>
        </authorList>
    </citation>
    <scope>NUCLEOTIDE SEQUENCE [LARGE SCALE GENOMIC DNA]</scope>
    <source>
        <strain>P125109</strain>
    </source>
</reference>
<comment type="function">
    <text evidence="1">Involved in the third step of the chorismate pathway, which leads to the biosynthesis of aromatic amino acids. Catalyzes the cis-dehydration of 3-dehydroquinate (DHQ) and introduces the first double bond of the aromatic ring to yield 3-dehydroshikimate.</text>
</comment>
<comment type="catalytic activity">
    <reaction evidence="1">
        <text>3-dehydroquinate = 3-dehydroshikimate + H2O</text>
        <dbReference type="Rhea" id="RHEA:21096"/>
        <dbReference type="ChEBI" id="CHEBI:15377"/>
        <dbReference type="ChEBI" id="CHEBI:16630"/>
        <dbReference type="ChEBI" id="CHEBI:32364"/>
        <dbReference type="EC" id="4.2.1.10"/>
    </reaction>
</comment>
<comment type="pathway">
    <text evidence="1">Metabolic intermediate biosynthesis; chorismate biosynthesis; chorismate from D-erythrose 4-phosphate and phosphoenolpyruvate: step 3/7.</text>
</comment>
<comment type="subunit">
    <text evidence="1">Homodimer.</text>
</comment>
<comment type="similarity">
    <text evidence="1">Belongs to the type-I 3-dehydroquinase family.</text>
</comment>